<proteinExistence type="inferred from homology"/>
<reference key="1">
    <citation type="submission" date="2008-10" db="EMBL/GenBank/DDBJ databases">
        <title>Genome sequence of Bacillus cereus AH820.</title>
        <authorList>
            <person name="Dodson R.J."/>
            <person name="Durkin A.S."/>
            <person name="Rosovitz M.J."/>
            <person name="Rasko D.A."/>
            <person name="Hoffmaster A."/>
            <person name="Ravel J."/>
            <person name="Sutton G."/>
        </authorList>
    </citation>
    <scope>NUCLEOTIDE SEQUENCE [LARGE SCALE GENOMIC DNA]</scope>
    <source>
        <strain>AH820</strain>
    </source>
</reference>
<sequence length="189" mass="21909">MRKIGIIGGTFDPPHYGHLLIANEVYHALNLEEVWFLPNQIPPHKQGRNITSVESRLQMLELATEAEEHFSICLEELSRKGPSYTYDTMLQLTKKYPDVQFHFIIGGDMVEYLPKWYNIEALLDLVTFVGVARPGYTLHTPYPITTVEIPEFAVSSSLLRERYKEKKTCKYLLPEKVQVYIERNGLYES</sequence>
<evidence type="ECO:0000255" key="1">
    <source>
        <dbReference type="HAMAP-Rule" id="MF_00244"/>
    </source>
</evidence>
<comment type="function">
    <text evidence="1">Catalyzes the reversible adenylation of nicotinate mononucleotide (NaMN) to nicotinic acid adenine dinucleotide (NaAD).</text>
</comment>
<comment type="catalytic activity">
    <reaction evidence="1">
        <text>nicotinate beta-D-ribonucleotide + ATP + H(+) = deamido-NAD(+) + diphosphate</text>
        <dbReference type="Rhea" id="RHEA:22860"/>
        <dbReference type="ChEBI" id="CHEBI:15378"/>
        <dbReference type="ChEBI" id="CHEBI:30616"/>
        <dbReference type="ChEBI" id="CHEBI:33019"/>
        <dbReference type="ChEBI" id="CHEBI:57502"/>
        <dbReference type="ChEBI" id="CHEBI:58437"/>
        <dbReference type="EC" id="2.7.7.18"/>
    </reaction>
</comment>
<comment type="pathway">
    <text evidence="1">Cofactor biosynthesis; NAD(+) biosynthesis; deamido-NAD(+) from nicotinate D-ribonucleotide: step 1/1.</text>
</comment>
<comment type="similarity">
    <text evidence="1">Belongs to the NadD family.</text>
</comment>
<gene>
    <name evidence="1" type="primary">nadD</name>
    <name type="ordered locus">BCAH820_4354</name>
</gene>
<protein>
    <recommendedName>
        <fullName evidence="1">Probable nicotinate-nucleotide adenylyltransferase</fullName>
        <ecNumber evidence="1">2.7.7.18</ecNumber>
    </recommendedName>
    <alternativeName>
        <fullName evidence="1">Deamido-NAD(+) diphosphorylase</fullName>
    </alternativeName>
    <alternativeName>
        <fullName evidence="1">Deamido-NAD(+) pyrophosphorylase</fullName>
    </alternativeName>
    <alternativeName>
        <fullName evidence="1">Nicotinate mononucleotide adenylyltransferase</fullName>
        <shortName evidence="1">NaMN adenylyltransferase</shortName>
    </alternativeName>
</protein>
<organism>
    <name type="scientific">Bacillus cereus (strain AH820)</name>
    <dbReference type="NCBI Taxonomy" id="405535"/>
    <lineage>
        <taxon>Bacteria</taxon>
        <taxon>Bacillati</taxon>
        <taxon>Bacillota</taxon>
        <taxon>Bacilli</taxon>
        <taxon>Bacillales</taxon>
        <taxon>Bacillaceae</taxon>
        <taxon>Bacillus</taxon>
        <taxon>Bacillus cereus group</taxon>
    </lineage>
</organism>
<accession>B7JNW4</accession>
<keyword id="KW-0067">ATP-binding</keyword>
<keyword id="KW-0520">NAD</keyword>
<keyword id="KW-0547">Nucleotide-binding</keyword>
<keyword id="KW-0548">Nucleotidyltransferase</keyword>
<keyword id="KW-0662">Pyridine nucleotide biosynthesis</keyword>
<keyword id="KW-0808">Transferase</keyword>
<dbReference type="EC" id="2.7.7.18" evidence="1"/>
<dbReference type="EMBL" id="CP001283">
    <property type="protein sequence ID" value="ACK91112.1"/>
    <property type="molecule type" value="Genomic_DNA"/>
</dbReference>
<dbReference type="RefSeq" id="WP_001226054.1">
    <property type="nucleotide sequence ID" value="NC_011773.1"/>
</dbReference>
<dbReference type="SMR" id="B7JNW4"/>
<dbReference type="KEGG" id="bcu:BCAH820_4354"/>
<dbReference type="HOGENOM" id="CLU_069765_3_1_9"/>
<dbReference type="UniPathway" id="UPA00253">
    <property type="reaction ID" value="UER00332"/>
</dbReference>
<dbReference type="Proteomes" id="UP000001363">
    <property type="component" value="Chromosome"/>
</dbReference>
<dbReference type="GO" id="GO:0005524">
    <property type="term" value="F:ATP binding"/>
    <property type="evidence" value="ECO:0007669"/>
    <property type="project" value="UniProtKB-KW"/>
</dbReference>
<dbReference type="GO" id="GO:0004515">
    <property type="term" value="F:nicotinate-nucleotide adenylyltransferase activity"/>
    <property type="evidence" value="ECO:0007669"/>
    <property type="project" value="UniProtKB-UniRule"/>
</dbReference>
<dbReference type="GO" id="GO:0009435">
    <property type="term" value="P:NAD biosynthetic process"/>
    <property type="evidence" value="ECO:0007669"/>
    <property type="project" value="UniProtKB-UniRule"/>
</dbReference>
<dbReference type="CDD" id="cd02165">
    <property type="entry name" value="NMNAT"/>
    <property type="match status" value="1"/>
</dbReference>
<dbReference type="FunFam" id="3.40.50.620:FF:000079">
    <property type="entry name" value="Probable nicotinate-nucleotide adenylyltransferase"/>
    <property type="match status" value="1"/>
</dbReference>
<dbReference type="Gene3D" id="3.40.50.620">
    <property type="entry name" value="HUPs"/>
    <property type="match status" value="1"/>
</dbReference>
<dbReference type="HAMAP" id="MF_00244">
    <property type="entry name" value="NaMN_adenylyltr"/>
    <property type="match status" value="1"/>
</dbReference>
<dbReference type="InterPro" id="IPR004821">
    <property type="entry name" value="Cyt_trans-like"/>
</dbReference>
<dbReference type="InterPro" id="IPR005248">
    <property type="entry name" value="NadD/NMNAT"/>
</dbReference>
<dbReference type="InterPro" id="IPR014729">
    <property type="entry name" value="Rossmann-like_a/b/a_fold"/>
</dbReference>
<dbReference type="NCBIfam" id="TIGR00125">
    <property type="entry name" value="cyt_tran_rel"/>
    <property type="match status" value="1"/>
</dbReference>
<dbReference type="NCBIfam" id="TIGR00482">
    <property type="entry name" value="nicotinate (nicotinamide) nucleotide adenylyltransferase"/>
    <property type="match status" value="1"/>
</dbReference>
<dbReference type="NCBIfam" id="NF000840">
    <property type="entry name" value="PRK00071.1-3"/>
    <property type="match status" value="1"/>
</dbReference>
<dbReference type="NCBIfam" id="NF000841">
    <property type="entry name" value="PRK00071.1-4"/>
    <property type="match status" value="1"/>
</dbReference>
<dbReference type="PANTHER" id="PTHR39321">
    <property type="entry name" value="NICOTINATE-NUCLEOTIDE ADENYLYLTRANSFERASE-RELATED"/>
    <property type="match status" value="1"/>
</dbReference>
<dbReference type="PANTHER" id="PTHR39321:SF3">
    <property type="entry name" value="PHOSPHOPANTETHEINE ADENYLYLTRANSFERASE"/>
    <property type="match status" value="1"/>
</dbReference>
<dbReference type="Pfam" id="PF01467">
    <property type="entry name" value="CTP_transf_like"/>
    <property type="match status" value="1"/>
</dbReference>
<dbReference type="SUPFAM" id="SSF52374">
    <property type="entry name" value="Nucleotidylyl transferase"/>
    <property type="match status" value="1"/>
</dbReference>
<feature type="chain" id="PRO_1000192227" description="Probable nicotinate-nucleotide adenylyltransferase">
    <location>
        <begin position="1"/>
        <end position="189"/>
    </location>
</feature>
<name>NADD_BACC0</name>